<comment type="catalytic activity">
    <reaction evidence="1">
        <text>(S)-4-amino-5-oxopentanoate = 5-aminolevulinate</text>
        <dbReference type="Rhea" id="RHEA:14265"/>
        <dbReference type="ChEBI" id="CHEBI:57501"/>
        <dbReference type="ChEBI" id="CHEBI:356416"/>
        <dbReference type="EC" id="5.4.3.8"/>
    </reaction>
</comment>
<comment type="cofactor">
    <cofactor evidence="1">
        <name>pyridoxal 5'-phosphate</name>
        <dbReference type="ChEBI" id="CHEBI:597326"/>
    </cofactor>
</comment>
<comment type="pathway">
    <text evidence="1">Porphyrin-containing compound metabolism; protoporphyrin-IX biosynthesis; 5-aminolevulinate from L-glutamyl-tRNA(Glu): step 2/2.</text>
</comment>
<comment type="subunit">
    <text evidence="1">Homodimer.</text>
</comment>
<comment type="subcellular location">
    <subcellularLocation>
        <location evidence="1">Cytoplasm</location>
    </subcellularLocation>
</comment>
<comment type="similarity">
    <text evidence="1">Belongs to the class-III pyridoxal-phosphate-dependent aminotransferase family. HemL subfamily.</text>
</comment>
<feature type="chain" id="PRO_0000382245" description="Glutamate-1-semialdehyde 2,1-aminomutase">
    <location>
        <begin position="1"/>
        <end position="426"/>
    </location>
</feature>
<feature type="modified residue" description="N6-(pyridoxal phosphate)lysine" evidence="1">
    <location>
        <position position="265"/>
    </location>
</feature>
<keyword id="KW-0963">Cytoplasm</keyword>
<keyword id="KW-0413">Isomerase</keyword>
<keyword id="KW-0627">Porphyrin biosynthesis</keyword>
<keyword id="KW-0663">Pyridoxal phosphate</keyword>
<keyword id="KW-1185">Reference proteome</keyword>
<name>GSA_AKKM8</name>
<gene>
    <name evidence="1" type="primary">hemL</name>
    <name type="ordered locus">Amuc_0417</name>
</gene>
<evidence type="ECO:0000255" key="1">
    <source>
        <dbReference type="HAMAP-Rule" id="MF_00375"/>
    </source>
</evidence>
<protein>
    <recommendedName>
        <fullName evidence="1">Glutamate-1-semialdehyde 2,1-aminomutase</fullName>
        <shortName evidence="1">GSA</shortName>
        <ecNumber evidence="1">5.4.3.8</ecNumber>
    </recommendedName>
    <alternativeName>
        <fullName evidence="1">Glutamate-1-semialdehyde aminotransferase</fullName>
        <shortName evidence="1">GSA-AT</shortName>
    </alternativeName>
</protein>
<organism>
    <name type="scientific">Akkermansia muciniphila (strain ATCC BAA-835 / DSM 22959 / JCM 33894 / BCRC 81048 / CCUG 64013 / CIP 107961 / Muc)</name>
    <dbReference type="NCBI Taxonomy" id="349741"/>
    <lineage>
        <taxon>Bacteria</taxon>
        <taxon>Pseudomonadati</taxon>
        <taxon>Verrucomicrobiota</taxon>
        <taxon>Verrucomicrobiia</taxon>
        <taxon>Verrucomicrobiales</taxon>
        <taxon>Akkermansiaceae</taxon>
        <taxon>Akkermansia</taxon>
    </lineage>
</organism>
<proteinExistence type="inferred from homology"/>
<sequence length="426" mass="46335">MNQSAQLFSRARSVIPGGVNSPVRAFRNVDGDPFFVQSAKGAYITDADGRQLIDYIGTWGPAILGHAPQPVLDAVHAAVDRGLGYGIPAPAEVDMAEMITDMVPSVEKVRMVNSGTEATMSAIRLARGYTGRRKIIKFIGCYHGHVDSLLVAAGSGALTFGEPDSAGVPREMTQLTLTVPYNDREAVKKAFELHGSDIAAVILEPFPANAGLYFPQNDFLHFLREITLRHDTLLIFDEVMTGFRVAPGGVQQLYGITPDLTCMGKVIGGGLPVGAFGGRSEIMDCLSPLGPVYQAGTLSGNPVAMAAGLAQLRELLKGNAYERLEQLGARMEEGIREALKKHGRNYTFHRAGSMFCLFFTEEEVYNLESAQKASKKLFKSFFWNMLEQGVYFAPSPYETGFISTAHTEEDIDRTVEAVRISLSRLG</sequence>
<reference key="1">
    <citation type="journal article" date="2011" name="PLoS ONE">
        <title>The genome of Akkermansia muciniphila, a dedicated intestinal mucin degrader, and its use in exploring intestinal metagenomes.</title>
        <authorList>
            <person name="van Passel M.W."/>
            <person name="Kant R."/>
            <person name="Zoetendal E.G."/>
            <person name="Plugge C.M."/>
            <person name="Derrien M."/>
            <person name="Malfatti S.A."/>
            <person name="Chain P.S."/>
            <person name="Woyke T."/>
            <person name="Palva A."/>
            <person name="de Vos W.M."/>
            <person name="Smidt H."/>
        </authorList>
    </citation>
    <scope>NUCLEOTIDE SEQUENCE [LARGE SCALE GENOMIC DNA]</scope>
    <source>
        <strain>ATCC BAA-835 / DSM 22959 / JCM 33894 / BCRC 81048 / CCUG 64013 / CIP 107961 / Muc</strain>
    </source>
</reference>
<accession>B2UNE3</accession>
<dbReference type="EC" id="5.4.3.8" evidence="1"/>
<dbReference type="EMBL" id="CP001071">
    <property type="protein sequence ID" value="ACD04255.1"/>
    <property type="molecule type" value="Genomic_DNA"/>
</dbReference>
<dbReference type="RefSeq" id="WP_012419470.1">
    <property type="nucleotide sequence ID" value="NZ_CP071807.1"/>
</dbReference>
<dbReference type="SMR" id="B2UNE3"/>
<dbReference type="STRING" id="349741.Amuc_0417"/>
<dbReference type="PaxDb" id="349741-Amuc_0417"/>
<dbReference type="KEGG" id="amu:Amuc_0417"/>
<dbReference type="eggNOG" id="COG0001">
    <property type="taxonomic scope" value="Bacteria"/>
</dbReference>
<dbReference type="HOGENOM" id="CLU_016922_1_5_0"/>
<dbReference type="OrthoDB" id="9807885at2"/>
<dbReference type="BioCyc" id="AMUC349741:G1GBX-461-MONOMER"/>
<dbReference type="UniPathway" id="UPA00251">
    <property type="reaction ID" value="UER00317"/>
</dbReference>
<dbReference type="Proteomes" id="UP000001031">
    <property type="component" value="Chromosome"/>
</dbReference>
<dbReference type="GO" id="GO:0005737">
    <property type="term" value="C:cytoplasm"/>
    <property type="evidence" value="ECO:0007669"/>
    <property type="project" value="UniProtKB-SubCell"/>
</dbReference>
<dbReference type="GO" id="GO:0042286">
    <property type="term" value="F:glutamate-1-semialdehyde 2,1-aminomutase activity"/>
    <property type="evidence" value="ECO:0007669"/>
    <property type="project" value="UniProtKB-UniRule"/>
</dbReference>
<dbReference type="GO" id="GO:0030170">
    <property type="term" value="F:pyridoxal phosphate binding"/>
    <property type="evidence" value="ECO:0007669"/>
    <property type="project" value="InterPro"/>
</dbReference>
<dbReference type="GO" id="GO:0008483">
    <property type="term" value="F:transaminase activity"/>
    <property type="evidence" value="ECO:0007669"/>
    <property type="project" value="InterPro"/>
</dbReference>
<dbReference type="GO" id="GO:0006782">
    <property type="term" value="P:protoporphyrinogen IX biosynthetic process"/>
    <property type="evidence" value="ECO:0007669"/>
    <property type="project" value="UniProtKB-UniRule"/>
</dbReference>
<dbReference type="CDD" id="cd00610">
    <property type="entry name" value="OAT_like"/>
    <property type="match status" value="1"/>
</dbReference>
<dbReference type="FunFam" id="3.40.640.10:FF:000021">
    <property type="entry name" value="Glutamate-1-semialdehyde 2,1-aminomutase"/>
    <property type="match status" value="1"/>
</dbReference>
<dbReference type="Gene3D" id="3.90.1150.10">
    <property type="entry name" value="Aspartate Aminotransferase, domain 1"/>
    <property type="match status" value="1"/>
</dbReference>
<dbReference type="Gene3D" id="3.40.640.10">
    <property type="entry name" value="Type I PLP-dependent aspartate aminotransferase-like (Major domain)"/>
    <property type="match status" value="1"/>
</dbReference>
<dbReference type="HAMAP" id="MF_00375">
    <property type="entry name" value="HemL_aminotrans_3"/>
    <property type="match status" value="1"/>
</dbReference>
<dbReference type="InterPro" id="IPR004639">
    <property type="entry name" value="4pyrrol_synth_GluAld_NH2Trfase"/>
</dbReference>
<dbReference type="InterPro" id="IPR005814">
    <property type="entry name" value="Aminotrans_3"/>
</dbReference>
<dbReference type="InterPro" id="IPR049704">
    <property type="entry name" value="Aminotrans_3_PPA_site"/>
</dbReference>
<dbReference type="InterPro" id="IPR015424">
    <property type="entry name" value="PyrdxlP-dep_Trfase"/>
</dbReference>
<dbReference type="InterPro" id="IPR015421">
    <property type="entry name" value="PyrdxlP-dep_Trfase_major"/>
</dbReference>
<dbReference type="InterPro" id="IPR015422">
    <property type="entry name" value="PyrdxlP-dep_Trfase_small"/>
</dbReference>
<dbReference type="NCBIfam" id="TIGR00713">
    <property type="entry name" value="hemL"/>
    <property type="match status" value="1"/>
</dbReference>
<dbReference type="NCBIfam" id="NF000818">
    <property type="entry name" value="PRK00062.1"/>
    <property type="match status" value="1"/>
</dbReference>
<dbReference type="PANTHER" id="PTHR43713">
    <property type="entry name" value="GLUTAMATE-1-SEMIALDEHYDE 2,1-AMINOMUTASE"/>
    <property type="match status" value="1"/>
</dbReference>
<dbReference type="PANTHER" id="PTHR43713:SF3">
    <property type="entry name" value="GLUTAMATE-1-SEMIALDEHYDE 2,1-AMINOMUTASE 1, CHLOROPLASTIC-RELATED"/>
    <property type="match status" value="1"/>
</dbReference>
<dbReference type="Pfam" id="PF00202">
    <property type="entry name" value="Aminotran_3"/>
    <property type="match status" value="1"/>
</dbReference>
<dbReference type="SUPFAM" id="SSF53383">
    <property type="entry name" value="PLP-dependent transferases"/>
    <property type="match status" value="1"/>
</dbReference>
<dbReference type="PROSITE" id="PS00600">
    <property type="entry name" value="AA_TRANSFER_CLASS_3"/>
    <property type="match status" value="1"/>
</dbReference>